<dbReference type="EMBL" id="AE005672">
    <property type="protein sequence ID" value="AAK75503.1"/>
    <property type="molecule type" value="Genomic_DNA"/>
</dbReference>
<dbReference type="PIR" id="F95163">
    <property type="entry name" value="F95163"/>
</dbReference>
<dbReference type="RefSeq" id="WP_000631259.1">
    <property type="nucleotide sequence ID" value="NZ_CP155539.1"/>
</dbReference>
<dbReference type="SMR" id="Q97Q26"/>
<dbReference type="PaxDb" id="170187-SP_1405"/>
<dbReference type="EnsemblBacteria" id="AAK75503">
    <property type="protein sequence ID" value="AAK75503"/>
    <property type="gene ID" value="SP_1405"/>
</dbReference>
<dbReference type="KEGG" id="spn:SP_1405"/>
<dbReference type="eggNOG" id="COG1393">
    <property type="taxonomic scope" value="Bacteria"/>
</dbReference>
<dbReference type="PhylomeDB" id="Q97Q26"/>
<dbReference type="BioCyc" id="SPNE170187:G1FZB-1413-MONOMER"/>
<dbReference type="Proteomes" id="UP000000585">
    <property type="component" value="Chromosome"/>
</dbReference>
<dbReference type="GO" id="GO:0005737">
    <property type="term" value="C:cytoplasm"/>
    <property type="evidence" value="ECO:0007669"/>
    <property type="project" value="UniProtKB-SubCell"/>
</dbReference>
<dbReference type="GO" id="GO:0045892">
    <property type="term" value="P:negative regulation of DNA-templated transcription"/>
    <property type="evidence" value="ECO:0007669"/>
    <property type="project" value="InterPro"/>
</dbReference>
<dbReference type="CDD" id="cd03032">
    <property type="entry name" value="ArsC_Spx"/>
    <property type="match status" value="1"/>
</dbReference>
<dbReference type="Gene3D" id="3.40.30.10">
    <property type="entry name" value="Glutaredoxin"/>
    <property type="match status" value="1"/>
</dbReference>
<dbReference type="HAMAP" id="MF_01132">
    <property type="entry name" value="Spx"/>
    <property type="match status" value="1"/>
</dbReference>
<dbReference type="InterPro" id="IPR006660">
    <property type="entry name" value="Arsenate_reductase-like"/>
</dbReference>
<dbReference type="InterPro" id="IPR023731">
    <property type="entry name" value="Spx"/>
</dbReference>
<dbReference type="InterPro" id="IPR036249">
    <property type="entry name" value="Thioredoxin-like_sf"/>
</dbReference>
<dbReference type="InterPro" id="IPR006504">
    <property type="entry name" value="Tscrpt_reg_Spx/MgsR"/>
</dbReference>
<dbReference type="NCBIfam" id="TIGR01617">
    <property type="entry name" value="arsC_related"/>
    <property type="match status" value="1"/>
</dbReference>
<dbReference type="NCBIfam" id="NF002459">
    <property type="entry name" value="PRK01655.1"/>
    <property type="match status" value="1"/>
</dbReference>
<dbReference type="PANTHER" id="PTHR30041">
    <property type="entry name" value="ARSENATE REDUCTASE"/>
    <property type="match status" value="1"/>
</dbReference>
<dbReference type="PANTHER" id="PTHR30041:SF7">
    <property type="entry name" value="GLOBAL TRANSCRIPTIONAL REGULATOR SPX"/>
    <property type="match status" value="1"/>
</dbReference>
<dbReference type="Pfam" id="PF03960">
    <property type="entry name" value="ArsC"/>
    <property type="match status" value="1"/>
</dbReference>
<dbReference type="SUPFAM" id="SSF52833">
    <property type="entry name" value="Thioredoxin-like"/>
    <property type="match status" value="1"/>
</dbReference>
<dbReference type="PROSITE" id="PS51353">
    <property type="entry name" value="ARSC"/>
    <property type="match status" value="1"/>
</dbReference>
<accession>Q97Q26</accession>
<proteinExistence type="inferred from homology"/>
<sequence>MITLFLSPSCTSCRKAKAWLEKHKVPFVEHNIMTSPLTRKELQHILSLTENGTDDIISTRSKIFQKLNIDVESISVSELLHLIEQYPSLLRRPIIIDAKRMQIGFNEDEIRAFLPRSYRKQELKEARMRAGIS</sequence>
<comment type="function">
    <text evidence="1">Global transcriptional regulator that plays a key role in stress response and exerts either positive or negative regulation of genes. Acts by interacting with the C-terminal domain of the alpha subunit of the RNA polymerase (RNAP). This interaction can enhance binding of RNAP to the promoter region of target genes and stimulate their transcription, or block interaction of RNAP with activator.</text>
</comment>
<comment type="subunit">
    <text evidence="1">Interacts with the C-terminal domain of the alpha subunit of the RNAP.</text>
</comment>
<comment type="subcellular location">
    <subcellularLocation>
        <location evidence="1">Cytoplasm</location>
    </subcellularLocation>
</comment>
<comment type="similarity">
    <text evidence="1">Belongs to the ArsC family. Spx subfamily.</text>
</comment>
<feature type="chain" id="PRO_0000162575" description="Global transcriptional regulator Spx">
    <location>
        <begin position="1"/>
        <end position="133"/>
    </location>
</feature>
<feature type="disulfide bond" description="Redox-active" evidence="1">
    <location>
        <begin position="10"/>
        <end position="13"/>
    </location>
</feature>
<keyword id="KW-0963">Cytoplasm</keyword>
<keyword id="KW-1015">Disulfide bond</keyword>
<keyword id="KW-0676">Redox-active center</keyword>
<keyword id="KW-1185">Reference proteome</keyword>
<keyword id="KW-0804">Transcription</keyword>
<keyword id="KW-0805">Transcription regulation</keyword>
<name>SPX_STRPN</name>
<organism>
    <name type="scientific">Streptococcus pneumoniae serotype 4 (strain ATCC BAA-334 / TIGR4)</name>
    <dbReference type="NCBI Taxonomy" id="170187"/>
    <lineage>
        <taxon>Bacteria</taxon>
        <taxon>Bacillati</taxon>
        <taxon>Bacillota</taxon>
        <taxon>Bacilli</taxon>
        <taxon>Lactobacillales</taxon>
        <taxon>Streptococcaceae</taxon>
        <taxon>Streptococcus</taxon>
    </lineage>
</organism>
<reference key="1">
    <citation type="journal article" date="2001" name="Science">
        <title>Complete genome sequence of a virulent isolate of Streptococcus pneumoniae.</title>
        <authorList>
            <person name="Tettelin H."/>
            <person name="Nelson K.E."/>
            <person name="Paulsen I.T."/>
            <person name="Eisen J.A."/>
            <person name="Read T.D."/>
            <person name="Peterson S.N."/>
            <person name="Heidelberg J.F."/>
            <person name="DeBoy R.T."/>
            <person name="Haft D.H."/>
            <person name="Dodson R.J."/>
            <person name="Durkin A.S."/>
            <person name="Gwinn M.L."/>
            <person name="Kolonay J.F."/>
            <person name="Nelson W.C."/>
            <person name="Peterson J.D."/>
            <person name="Umayam L.A."/>
            <person name="White O."/>
            <person name="Salzberg S.L."/>
            <person name="Lewis M.R."/>
            <person name="Radune D."/>
            <person name="Holtzapple E.K."/>
            <person name="Khouri H.M."/>
            <person name="Wolf A.M."/>
            <person name="Utterback T.R."/>
            <person name="Hansen C.L."/>
            <person name="McDonald L.A."/>
            <person name="Feldblyum T.V."/>
            <person name="Angiuoli S.V."/>
            <person name="Dickinson T."/>
            <person name="Hickey E.K."/>
            <person name="Holt I.E."/>
            <person name="Loftus B.J."/>
            <person name="Yang F."/>
            <person name="Smith H.O."/>
            <person name="Venter J.C."/>
            <person name="Dougherty B.A."/>
            <person name="Morrison D.A."/>
            <person name="Hollingshead S.K."/>
            <person name="Fraser C.M."/>
        </authorList>
    </citation>
    <scope>NUCLEOTIDE SEQUENCE [LARGE SCALE GENOMIC DNA]</scope>
    <source>
        <strain>ATCC BAA-334 / TIGR4</strain>
    </source>
</reference>
<protein>
    <recommendedName>
        <fullName evidence="1">Global transcriptional regulator Spx</fullName>
    </recommendedName>
</protein>
<evidence type="ECO:0000255" key="1">
    <source>
        <dbReference type="HAMAP-Rule" id="MF_01132"/>
    </source>
</evidence>
<gene>
    <name evidence="1" type="primary">spx</name>
    <name type="ordered locus">SP_1405</name>
</gene>